<organism>
    <name type="scientific">Bacillus cereus (strain ZK / E33L)</name>
    <dbReference type="NCBI Taxonomy" id="288681"/>
    <lineage>
        <taxon>Bacteria</taxon>
        <taxon>Bacillati</taxon>
        <taxon>Bacillota</taxon>
        <taxon>Bacilli</taxon>
        <taxon>Bacillales</taxon>
        <taxon>Bacillaceae</taxon>
        <taxon>Bacillus</taxon>
        <taxon>Bacillus cereus group</taxon>
    </lineage>
</organism>
<dbReference type="EC" id="4.1.1.65" evidence="1"/>
<dbReference type="EMBL" id="CP000001">
    <property type="protein sequence ID" value="AAU16185.1"/>
    <property type="molecule type" value="Genomic_DNA"/>
</dbReference>
<dbReference type="RefSeq" id="WP_001254996.1">
    <property type="nucleotide sequence ID" value="NC_006274.1"/>
</dbReference>
<dbReference type="SMR" id="Q634K5"/>
<dbReference type="KEGG" id="bcz:BCE33L4083"/>
<dbReference type="PATRIC" id="fig|288681.22.peg.1304"/>
<dbReference type="UniPathway" id="UPA00558">
    <property type="reaction ID" value="UER00616"/>
</dbReference>
<dbReference type="Proteomes" id="UP000002612">
    <property type="component" value="Chromosome"/>
</dbReference>
<dbReference type="GO" id="GO:0005886">
    <property type="term" value="C:plasma membrane"/>
    <property type="evidence" value="ECO:0007669"/>
    <property type="project" value="UniProtKB-SubCell"/>
</dbReference>
<dbReference type="GO" id="GO:0004609">
    <property type="term" value="F:phosphatidylserine decarboxylase activity"/>
    <property type="evidence" value="ECO:0007669"/>
    <property type="project" value="UniProtKB-UniRule"/>
</dbReference>
<dbReference type="GO" id="GO:0006646">
    <property type="term" value="P:phosphatidylethanolamine biosynthetic process"/>
    <property type="evidence" value="ECO:0007669"/>
    <property type="project" value="UniProtKB-UniRule"/>
</dbReference>
<dbReference type="HAMAP" id="MF_00662">
    <property type="entry name" value="PS_decarb_PSD_B_type1"/>
    <property type="match status" value="1"/>
</dbReference>
<dbReference type="InterPro" id="IPR003817">
    <property type="entry name" value="PS_Dcarbxylase"/>
</dbReference>
<dbReference type="InterPro" id="IPR033177">
    <property type="entry name" value="PSD-B"/>
</dbReference>
<dbReference type="InterPro" id="IPR033178">
    <property type="entry name" value="PSD_type1_pro"/>
</dbReference>
<dbReference type="NCBIfam" id="NF002853">
    <property type="entry name" value="PRK03140.1"/>
    <property type="match status" value="1"/>
</dbReference>
<dbReference type="NCBIfam" id="TIGR00163">
    <property type="entry name" value="PS_decarb"/>
    <property type="match status" value="1"/>
</dbReference>
<dbReference type="PANTHER" id="PTHR10067">
    <property type="entry name" value="PHOSPHATIDYLSERINE DECARBOXYLASE"/>
    <property type="match status" value="1"/>
</dbReference>
<dbReference type="PANTHER" id="PTHR10067:SF6">
    <property type="entry name" value="PHOSPHATIDYLSERINE DECARBOXYLASE PROENZYME, MITOCHONDRIAL"/>
    <property type="match status" value="1"/>
</dbReference>
<dbReference type="Pfam" id="PF02666">
    <property type="entry name" value="PS_Dcarbxylase"/>
    <property type="match status" value="1"/>
</dbReference>
<name>PSD_BACCZ</name>
<sequence>MRRTLYRLMIELTNGRFTSYILRKFAQSRLSSIIIPSYAKVFQINQDEMEKGLKEYRTLHELFTRKLKEGKRSIDTDASSIVSPVDGVFADHGPIEDTKTFDIKGKRYSIVDMLGNEERAQRYAGGTYMVIYLSPSHYHRIHSPLSGSVTERFVLGRKSYPVNAAGMEYGKEPLSKNYRSVTEVNSDGEHMALVKVGAMFVNSIELLHERDTVQKGEEMAYFTFGSTVVLLFEKDMIEVVKELKSGQELRLGEKIATRLAHK</sequence>
<feature type="chain" id="PRO_0000029625" description="Phosphatidylserine decarboxylase beta chain" evidence="1">
    <location>
        <begin position="1"/>
        <end position="225"/>
    </location>
</feature>
<feature type="chain" id="PRO_0000029626" description="Phosphatidylserine decarboxylase alpha chain" evidence="1">
    <location>
        <begin position="226"/>
        <end position="262"/>
    </location>
</feature>
<feature type="active site" description="Charge relay system; for autoendoproteolytic cleavage activity" evidence="1">
    <location>
        <position position="86"/>
    </location>
</feature>
<feature type="active site" description="Charge relay system; for autoendoproteolytic cleavage activity" evidence="1">
    <location>
        <position position="142"/>
    </location>
</feature>
<feature type="active site" description="Charge relay system; for autoendoproteolytic cleavage activity" evidence="1">
    <location>
        <position position="226"/>
    </location>
</feature>
<feature type="active site" description="Schiff-base intermediate with substrate; via pyruvic acid; for decarboxylase activity" evidence="1">
    <location>
        <position position="226"/>
    </location>
</feature>
<feature type="site" description="Cleavage (non-hydrolytic); by autocatalysis" evidence="1">
    <location>
        <begin position="225"/>
        <end position="226"/>
    </location>
</feature>
<feature type="modified residue" description="Pyruvic acid (Ser); by autocatalysis" evidence="1">
    <location>
        <position position="226"/>
    </location>
</feature>
<gene>
    <name evidence="1" type="primary">psd</name>
    <name type="ordered locus">BCE33L4083</name>
</gene>
<proteinExistence type="inferred from homology"/>
<keyword id="KW-1003">Cell membrane</keyword>
<keyword id="KW-0210">Decarboxylase</keyword>
<keyword id="KW-0444">Lipid biosynthesis</keyword>
<keyword id="KW-0443">Lipid metabolism</keyword>
<keyword id="KW-0456">Lyase</keyword>
<keyword id="KW-0472">Membrane</keyword>
<keyword id="KW-0594">Phospholipid biosynthesis</keyword>
<keyword id="KW-1208">Phospholipid metabolism</keyword>
<keyword id="KW-0670">Pyruvate</keyword>
<keyword id="KW-0865">Zymogen</keyword>
<reference key="1">
    <citation type="journal article" date="2006" name="J. Bacteriol.">
        <title>Pathogenomic sequence analysis of Bacillus cereus and Bacillus thuringiensis isolates closely related to Bacillus anthracis.</title>
        <authorList>
            <person name="Han C.S."/>
            <person name="Xie G."/>
            <person name="Challacombe J.F."/>
            <person name="Altherr M.R."/>
            <person name="Bhotika S.S."/>
            <person name="Bruce D."/>
            <person name="Campbell C.S."/>
            <person name="Campbell M.L."/>
            <person name="Chen J."/>
            <person name="Chertkov O."/>
            <person name="Cleland C."/>
            <person name="Dimitrijevic M."/>
            <person name="Doggett N.A."/>
            <person name="Fawcett J.J."/>
            <person name="Glavina T."/>
            <person name="Goodwin L.A."/>
            <person name="Hill K.K."/>
            <person name="Hitchcock P."/>
            <person name="Jackson P.J."/>
            <person name="Keim P."/>
            <person name="Kewalramani A.R."/>
            <person name="Longmire J."/>
            <person name="Lucas S."/>
            <person name="Malfatti S."/>
            <person name="McMurry K."/>
            <person name="Meincke L.J."/>
            <person name="Misra M."/>
            <person name="Moseman B.L."/>
            <person name="Mundt M."/>
            <person name="Munk A.C."/>
            <person name="Okinaka R.T."/>
            <person name="Parson-Quintana B."/>
            <person name="Reilly L.P."/>
            <person name="Richardson P."/>
            <person name="Robinson D.L."/>
            <person name="Rubin E."/>
            <person name="Saunders E."/>
            <person name="Tapia R."/>
            <person name="Tesmer J.G."/>
            <person name="Thayer N."/>
            <person name="Thompson L.S."/>
            <person name="Tice H."/>
            <person name="Ticknor L.O."/>
            <person name="Wills P.L."/>
            <person name="Brettin T.S."/>
            <person name="Gilna P."/>
        </authorList>
    </citation>
    <scope>NUCLEOTIDE SEQUENCE [LARGE SCALE GENOMIC DNA]</scope>
    <source>
        <strain>ZK / E33L</strain>
    </source>
</reference>
<comment type="function">
    <text evidence="1">Catalyzes the formation of phosphatidylethanolamine (PtdEtn) from phosphatidylserine (PtdSer).</text>
</comment>
<comment type="catalytic activity">
    <reaction evidence="1">
        <text>a 1,2-diacyl-sn-glycero-3-phospho-L-serine + H(+) = a 1,2-diacyl-sn-glycero-3-phosphoethanolamine + CO2</text>
        <dbReference type="Rhea" id="RHEA:20828"/>
        <dbReference type="ChEBI" id="CHEBI:15378"/>
        <dbReference type="ChEBI" id="CHEBI:16526"/>
        <dbReference type="ChEBI" id="CHEBI:57262"/>
        <dbReference type="ChEBI" id="CHEBI:64612"/>
        <dbReference type="EC" id="4.1.1.65"/>
    </reaction>
</comment>
<comment type="cofactor">
    <cofactor evidence="1">
        <name>pyruvate</name>
        <dbReference type="ChEBI" id="CHEBI:15361"/>
    </cofactor>
    <text evidence="1">Binds 1 pyruvoyl group covalently per subunit.</text>
</comment>
<comment type="pathway">
    <text evidence="1">Phospholipid metabolism; phosphatidylethanolamine biosynthesis; phosphatidylethanolamine from CDP-diacylglycerol: step 2/2.</text>
</comment>
<comment type="subunit">
    <text evidence="1">Heterodimer of a large membrane-associated beta subunit and a small pyruvoyl-containing alpha subunit.</text>
</comment>
<comment type="subcellular location">
    <subcellularLocation>
        <location evidence="1">Cell membrane</location>
        <topology evidence="1">Peripheral membrane protein</topology>
    </subcellularLocation>
</comment>
<comment type="PTM">
    <text evidence="1">Is synthesized initially as an inactive proenzyme. Formation of the active enzyme involves a self-maturation process in which the active site pyruvoyl group is generated from an internal serine residue via an autocatalytic post-translational modification. Two non-identical subunits are generated from the proenzyme in this reaction, and the pyruvate is formed at the N-terminus of the alpha chain, which is derived from the carboxyl end of the proenzyme. The autoendoproteolytic cleavage occurs by a canonical serine protease mechanism, in which the side chain hydroxyl group of the serine supplies its oxygen atom to form the C-terminus of the beta chain, while the remainder of the serine residue undergoes an oxidative deamination to produce ammonia and the pyruvoyl prosthetic group on the alpha chain. During this reaction, the Ser that is part of the protease active site of the proenzyme becomes the pyruvoyl prosthetic group, which constitutes an essential element of the active site of the mature decarboxylase.</text>
</comment>
<comment type="similarity">
    <text evidence="1">Belongs to the phosphatidylserine decarboxylase family. PSD-B subfamily. Prokaryotic type I sub-subfamily.</text>
</comment>
<protein>
    <recommendedName>
        <fullName evidence="1">Phosphatidylserine decarboxylase proenzyme</fullName>
        <ecNumber evidence="1">4.1.1.65</ecNumber>
    </recommendedName>
    <component>
        <recommendedName>
            <fullName evidence="1">Phosphatidylserine decarboxylase alpha chain</fullName>
        </recommendedName>
    </component>
    <component>
        <recommendedName>
            <fullName evidence="1">Phosphatidylserine decarboxylase beta chain</fullName>
        </recommendedName>
    </component>
</protein>
<accession>Q634K5</accession>
<evidence type="ECO:0000255" key="1">
    <source>
        <dbReference type="HAMAP-Rule" id="MF_00662"/>
    </source>
</evidence>